<name>UBID_SHESR</name>
<sequence length="493" mass="55494">MSFKDLRSFIDHLEANGELKRISYPVDPHLEMTEIADRVLRAKGPALLFENPTNHSMPVLANLFGTPKRVAMALGKEDPLALRDVGELLAFLKEPEPPRGFKDAISKIPMFKQALNMPPKTVRNPACQQVVKTGDEVDLTQLPIQHCWPGDVAPLVTWGLTITKGPRKSRQNLGIYRQQLLGKNKLIMRWLSHRGGALDFADFKEQFPGERYPVVVALGSDPVTILGAVTPVPDAMSEYAFAGLLRGERTEVCKALSCDLEVPASSEIILEGYIDPDEMAEEGPYGDHTGYYNETDKFPVFTVTHITHRKDPIYHSTYTGRPPDEPAMLGVALNEVFVPILRKQYPEIIDFYLPPEGCSYRMAVISIRKQYPGHAKRVMMGAWSFLRQFMYTKFIVVVDDDVNCRDWNDVIWAITTRMDPKRDTVMIDNTPIDYLDFASPVAGLGSKMGLDATNKWEGETNREWGTPIVMDPKVKQKIDSIWDELGIDDSPTL</sequence>
<proteinExistence type="inferred from homology"/>
<keyword id="KW-1003">Cell membrane</keyword>
<keyword id="KW-0210">Decarboxylase</keyword>
<keyword id="KW-0285">Flavoprotein</keyword>
<keyword id="KW-0288">FMN</keyword>
<keyword id="KW-0456">Lyase</keyword>
<keyword id="KW-0464">Manganese</keyword>
<keyword id="KW-0472">Membrane</keyword>
<keyword id="KW-0479">Metal-binding</keyword>
<keyword id="KW-0831">Ubiquinone biosynthesis</keyword>
<organism>
    <name type="scientific">Shewanella sp. (strain MR-7)</name>
    <dbReference type="NCBI Taxonomy" id="60481"/>
    <lineage>
        <taxon>Bacteria</taxon>
        <taxon>Pseudomonadati</taxon>
        <taxon>Pseudomonadota</taxon>
        <taxon>Gammaproteobacteria</taxon>
        <taxon>Alteromonadales</taxon>
        <taxon>Shewanellaceae</taxon>
        <taxon>Shewanella</taxon>
    </lineage>
</organism>
<comment type="function">
    <text evidence="1">Catalyzes the decarboxylation of 3-octaprenyl-4-hydroxy benzoate to 2-octaprenylphenol, an intermediate step in ubiquinone biosynthesis.</text>
</comment>
<comment type="catalytic activity">
    <reaction evidence="1">
        <text>a 4-hydroxy-3-(all-trans-polyprenyl)benzoate + H(+) = a 2-(all-trans-polyprenyl)phenol + CO2</text>
        <dbReference type="Rhea" id="RHEA:41680"/>
        <dbReference type="Rhea" id="RHEA-COMP:9514"/>
        <dbReference type="Rhea" id="RHEA-COMP:9516"/>
        <dbReference type="ChEBI" id="CHEBI:1269"/>
        <dbReference type="ChEBI" id="CHEBI:15378"/>
        <dbReference type="ChEBI" id="CHEBI:16526"/>
        <dbReference type="ChEBI" id="CHEBI:78396"/>
        <dbReference type="EC" id="4.1.1.98"/>
    </reaction>
</comment>
<comment type="cofactor">
    <cofactor evidence="1">
        <name>prenylated FMN</name>
        <dbReference type="ChEBI" id="CHEBI:87746"/>
    </cofactor>
    <text evidence="1">Binds 1 prenylated FMN per subunit.</text>
</comment>
<comment type="cofactor">
    <cofactor evidence="1">
        <name>Mn(2+)</name>
        <dbReference type="ChEBI" id="CHEBI:29035"/>
    </cofactor>
</comment>
<comment type="pathway">
    <text evidence="1">Cofactor biosynthesis; ubiquinone biosynthesis.</text>
</comment>
<comment type="subunit">
    <text evidence="1">Homohexamer.</text>
</comment>
<comment type="subcellular location">
    <subcellularLocation>
        <location evidence="1">Cell membrane</location>
        <topology evidence="1">Peripheral membrane protein</topology>
    </subcellularLocation>
</comment>
<comment type="similarity">
    <text evidence="1">Belongs to the UbiD family.</text>
</comment>
<evidence type="ECO:0000255" key="1">
    <source>
        <dbReference type="HAMAP-Rule" id="MF_01636"/>
    </source>
</evidence>
<protein>
    <recommendedName>
        <fullName evidence="1">3-octaprenyl-4-hydroxybenzoate carboxy-lyase</fullName>
        <ecNumber evidence="1">4.1.1.98</ecNumber>
    </recommendedName>
    <alternativeName>
        <fullName evidence="1">Polyprenyl p-hydroxybenzoate decarboxylase</fullName>
    </alternativeName>
</protein>
<accession>Q0HQV0</accession>
<dbReference type="EC" id="4.1.1.98" evidence="1"/>
<dbReference type="EMBL" id="CP000444">
    <property type="protein sequence ID" value="ABI44505.1"/>
    <property type="molecule type" value="Genomic_DNA"/>
</dbReference>
<dbReference type="SMR" id="Q0HQV0"/>
<dbReference type="KEGG" id="shm:Shewmr7_3525"/>
<dbReference type="HOGENOM" id="CLU_023348_4_1_6"/>
<dbReference type="UniPathway" id="UPA00232"/>
<dbReference type="GO" id="GO:0005829">
    <property type="term" value="C:cytosol"/>
    <property type="evidence" value="ECO:0007669"/>
    <property type="project" value="TreeGrafter"/>
</dbReference>
<dbReference type="GO" id="GO:0005886">
    <property type="term" value="C:plasma membrane"/>
    <property type="evidence" value="ECO:0007669"/>
    <property type="project" value="UniProtKB-SubCell"/>
</dbReference>
<dbReference type="GO" id="GO:0008694">
    <property type="term" value="F:3-octaprenyl-4-hydroxybenzoate carboxy-lyase activity"/>
    <property type="evidence" value="ECO:0007669"/>
    <property type="project" value="UniProtKB-UniRule"/>
</dbReference>
<dbReference type="GO" id="GO:0046872">
    <property type="term" value="F:metal ion binding"/>
    <property type="evidence" value="ECO:0007669"/>
    <property type="project" value="UniProtKB-KW"/>
</dbReference>
<dbReference type="GO" id="GO:0006744">
    <property type="term" value="P:ubiquinone biosynthetic process"/>
    <property type="evidence" value="ECO:0007669"/>
    <property type="project" value="UniProtKB-UniRule"/>
</dbReference>
<dbReference type="FunFam" id="1.20.5.570:FF:000001">
    <property type="entry name" value="3-octaprenyl-4-hydroxybenzoate carboxy-lyase"/>
    <property type="match status" value="1"/>
</dbReference>
<dbReference type="FunFam" id="3.40.1670.10:FF:000001">
    <property type="entry name" value="3-octaprenyl-4-hydroxybenzoate carboxy-lyase"/>
    <property type="match status" value="1"/>
</dbReference>
<dbReference type="Gene3D" id="1.20.5.570">
    <property type="entry name" value="Single helix bin"/>
    <property type="match status" value="1"/>
</dbReference>
<dbReference type="Gene3D" id="3.40.1670.10">
    <property type="entry name" value="UbiD C-terminal domain-like"/>
    <property type="match status" value="1"/>
</dbReference>
<dbReference type="HAMAP" id="MF_01636">
    <property type="entry name" value="UbiD"/>
    <property type="match status" value="1"/>
</dbReference>
<dbReference type="InterPro" id="IPR002830">
    <property type="entry name" value="UbiD"/>
</dbReference>
<dbReference type="InterPro" id="IPR049381">
    <property type="entry name" value="UbiD-like_C"/>
</dbReference>
<dbReference type="InterPro" id="IPR049383">
    <property type="entry name" value="UbiD-like_N"/>
</dbReference>
<dbReference type="InterPro" id="IPR023677">
    <property type="entry name" value="UbiD_bacteria"/>
</dbReference>
<dbReference type="InterPro" id="IPR048304">
    <property type="entry name" value="UbiD_Rift_dom"/>
</dbReference>
<dbReference type="NCBIfam" id="NF008175">
    <property type="entry name" value="PRK10922.1"/>
    <property type="match status" value="1"/>
</dbReference>
<dbReference type="NCBIfam" id="TIGR00148">
    <property type="entry name" value="UbiD family decarboxylase"/>
    <property type="match status" value="1"/>
</dbReference>
<dbReference type="PANTHER" id="PTHR30108">
    <property type="entry name" value="3-OCTAPRENYL-4-HYDROXYBENZOATE CARBOXY-LYASE-RELATED"/>
    <property type="match status" value="1"/>
</dbReference>
<dbReference type="PANTHER" id="PTHR30108:SF17">
    <property type="entry name" value="FERULIC ACID DECARBOXYLASE 1"/>
    <property type="match status" value="1"/>
</dbReference>
<dbReference type="Pfam" id="PF01977">
    <property type="entry name" value="UbiD"/>
    <property type="match status" value="1"/>
</dbReference>
<dbReference type="Pfam" id="PF20696">
    <property type="entry name" value="UbiD_C"/>
    <property type="match status" value="1"/>
</dbReference>
<dbReference type="Pfam" id="PF20695">
    <property type="entry name" value="UbiD_N"/>
    <property type="match status" value="1"/>
</dbReference>
<dbReference type="SUPFAM" id="SSF50475">
    <property type="entry name" value="FMN-binding split barrel"/>
    <property type="match status" value="1"/>
</dbReference>
<dbReference type="SUPFAM" id="SSF143968">
    <property type="entry name" value="UbiD C-terminal domain-like"/>
    <property type="match status" value="1"/>
</dbReference>
<reference key="1">
    <citation type="submission" date="2006-08" db="EMBL/GenBank/DDBJ databases">
        <title>Complete sequence of chromosome 1 of Shewanella sp. MR-7.</title>
        <authorList>
            <person name="Copeland A."/>
            <person name="Lucas S."/>
            <person name="Lapidus A."/>
            <person name="Barry K."/>
            <person name="Detter J.C."/>
            <person name="Glavina del Rio T."/>
            <person name="Hammon N."/>
            <person name="Israni S."/>
            <person name="Dalin E."/>
            <person name="Tice H."/>
            <person name="Pitluck S."/>
            <person name="Kiss H."/>
            <person name="Brettin T."/>
            <person name="Bruce D."/>
            <person name="Han C."/>
            <person name="Tapia R."/>
            <person name="Gilna P."/>
            <person name="Schmutz J."/>
            <person name="Larimer F."/>
            <person name="Land M."/>
            <person name="Hauser L."/>
            <person name="Kyrpides N."/>
            <person name="Mikhailova N."/>
            <person name="Nealson K."/>
            <person name="Konstantinidis K."/>
            <person name="Klappenbach J."/>
            <person name="Tiedje J."/>
            <person name="Richardson P."/>
        </authorList>
    </citation>
    <scope>NUCLEOTIDE SEQUENCE [LARGE SCALE GENOMIC DNA]</scope>
    <source>
        <strain>MR-7</strain>
    </source>
</reference>
<gene>
    <name evidence="1" type="primary">ubiD</name>
    <name type="ordered locus">Shewmr7_3525</name>
</gene>
<feature type="chain" id="PRO_0000267698" description="3-octaprenyl-4-hydroxybenzoate carboxy-lyase">
    <location>
        <begin position="1"/>
        <end position="493"/>
    </location>
</feature>
<feature type="active site" description="Proton donor" evidence="1">
    <location>
        <position position="287"/>
    </location>
</feature>
<feature type="binding site" evidence="1">
    <location>
        <position position="172"/>
    </location>
    <ligand>
        <name>Mn(2+)</name>
        <dbReference type="ChEBI" id="CHEBI:29035"/>
    </ligand>
</feature>
<feature type="binding site" evidence="1">
    <location>
        <begin position="175"/>
        <end position="177"/>
    </location>
    <ligand>
        <name>prenylated FMN</name>
        <dbReference type="ChEBI" id="CHEBI:87746"/>
    </ligand>
</feature>
<feature type="binding site" evidence="1">
    <location>
        <begin position="189"/>
        <end position="191"/>
    </location>
    <ligand>
        <name>prenylated FMN</name>
        <dbReference type="ChEBI" id="CHEBI:87746"/>
    </ligand>
</feature>
<feature type="binding site" evidence="1">
    <location>
        <begin position="194"/>
        <end position="195"/>
    </location>
    <ligand>
        <name>prenylated FMN</name>
        <dbReference type="ChEBI" id="CHEBI:87746"/>
    </ligand>
</feature>
<feature type="binding site" evidence="1">
    <location>
        <position position="238"/>
    </location>
    <ligand>
        <name>Mn(2+)</name>
        <dbReference type="ChEBI" id="CHEBI:29035"/>
    </ligand>
</feature>